<sequence length="303" mass="32734">MMSESNKQQAVNKLTEIVANFTAMISTRMPDDVVDKLKQLKDAETSSMGKIIYHTMFDNMQKAIDLNRPACQDTGEIMFFVKVGSRFPLLGELQSILKQAVEEATVKAPLRHNAVEIFDEVNTGKNTGSGVPWVTWDIIPDNDDAEIEVYMAGGGCTLPGRSKVLMPSEGYEGVVKFVFENISTLAVNACPPVLVGVGIATSVETAAVLSRKAILRPIGSRHPNPKAAELELRLEEGLNRLGIGPQGLTGNSSVMGVHIESAARHPSTIGVAVSTGCWAHRRGTLLVHADLTFENLSHTRSAL</sequence>
<accession>Q0TD45</accession>
<protein>
    <recommendedName>
        <fullName>L(+)-tartrate dehydratase subunit alpha</fullName>
        <shortName>L-TTD alpha</shortName>
        <ecNumber>4.2.1.32</ecNumber>
    </recommendedName>
</protein>
<feature type="chain" id="PRO_0000262697" description="L(+)-tartrate dehydratase subunit alpha">
    <location>
        <begin position="1"/>
        <end position="303"/>
    </location>
</feature>
<feature type="binding site" evidence="2">
    <location>
        <position position="71"/>
    </location>
    <ligand>
        <name>iron-sulfur cluster</name>
        <dbReference type="ChEBI" id="CHEBI:30408"/>
    </ligand>
</feature>
<feature type="binding site" evidence="2">
    <location>
        <position position="190"/>
    </location>
    <ligand>
        <name>iron-sulfur cluster</name>
        <dbReference type="ChEBI" id="CHEBI:30408"/>
    </ligand>
</feature>
<feature type="binding site" evidence="2">
    <location>
        <position position="277"/>
    </location>
    <ligand>
        <name>iron-sulfur cluster</name>
        <dbReference type="ChEBI" id="CHEBI:30408"/>
    </ligand>
</feature>
<keyword id="KW-0004">4Fe-4S</keyword>
<keyword id="KW-0408">Iron</keyword>
<keyword id="KW-0411">Iron-sulfur</keyword>
<keyword id="KW-0456">Lyase</keyword>
<keyword id="KW-0479">Metal-binding</keyword>
<dbReference type="EC" id="4.2.1.32"/>
<dbReference type="EMBL" id="CP000247">
    <property type="protein sequence ID" value="ABG71134.1"/>
    <property type="molecule type" value="Genomic_DNA"/>
</dbReference>
<dbReference type="RefSeq" id="WP_000986797.1">
    <property type="nucleotide sequence ID" value="NC_008253.1"/>
</dbReference>
<dbReference type="SMR" id="Q0TD45"/>
<dbReference type="GeneID" id="93778932"/>
<dbReference type="KEGG" id="ecp:ECP_3151"/>
<dbReference type="HOGENOM" id="CLU_041245_1_0_6"/>
<dbReference type="Proteomes" id="UP000009182">
    <property type="component" value="Chromosome"/>
</dbReference>
<dbReference type="GO" id="GO:0051539">
    <property type="term" value="F:4 iron, 4 sulfur cluster binding"/>
    <property type="evidence" value="ECO:0007669"/>
    <property type="project" value="UniProtKB-KW"/>
</dbReference>
<dbReference type="GO" id="GO:0008730">
    <property type="term" value="F:L(+)-tartrate dehydratase activity"/>
    <property type="evidence" value="ECO:0007669"/>
    <property type="project" value="UniProtKB-EC"/>
</dbReference>
<dbReference type="GO" id="GO:0046872">
    <property type="term" value="F:metal ion binding"/>
    <property type="evidence" value="ECO:0007669"/>
    <property type="project" value="UniProtKB-KW"/>
</dbReference>
<dbReference type="InterPro" id="IPR051208">
    <property type="entry name" value="Class-I_Fumarase/Tartrate_DH"/>
</dbReference>
<dbReference type="InterPro" id="IPR004646">
    <property type="entry name" value="Fe-S_hydro-lyase_TtdA-typ_cat"/>
</dbReference>
<dbReference type="NCBIfam" id="NF006084">
    <property type="entry name" value="PRK08230.1"/>
    <property type="match status" value="1"/>
</dbReference>
<dbReference type="NCBIfam" id="TIGR00722">
    <property type="entry name" value="ttdA_fumA_fumB"/>
    <property type="match status" value="1"/>
</dbReference>
<dbReference type="PANTHER" id="PTHR30389">
    <property type="entry name" value="FUMARATE HYDRATASE-RELATED"/>
    <property type="match status" value="1"/>
</dbReference>
<dbReference type="PANTHER" id="PTHR30389:SF19">
    <property type="entry name" value="L(+)-TARTRATE DEHYDRATASE SUBUNIT ALPHA"/>
    <property type="match status" value="1"/>
</dbReference>
<dbReference type="Pfam" id="PF05681">
    <property type="entry name" value="Fumerase"/>
    <property type="match status" value="1"/>
</dbReference>
<evidence type="ECO:0000250" key="1"/>
<evidence type="ECO:0000250" key="2">
    <source>
        <dbReference type="UniProtKB" id="E9AE57"/>
    </source>
</evidence>
<evidence type="ECO:0000250" key="3">
    <source>
        <dbReference type="UniProtKB" id="P05847"/>
    </source>
</evidence>
<evidence type="ECO:0000305" key="4"/>
<reference key="1">
    <citation type="journal article" date="2006" name="Mol. Microbiol.">
        <title>Role of pathogenicity island-associated integrases in the genome plasticity of uropathogenic Escherichia coli strain 536.</title>
        <authorList>
            <person name="Hochhut B."/>
            <person name="Wilde C."/>
            <person name="Balling G."/>
            <person name="Middendorf B."/>
            <person name="Dobrindt U."/>
            <person name="Brzuszkiewicz E."/>
            <person name="Gottschalk G."/>
            <person name="Carniel E."/>
            <person name="Hacker J."/>
        </authorList>
    </citation>
    <scope>NUCLEOTIDE SEQUENCE [LARGE SCALE GENOMIC DNA]</scope>
    <source>
        <strain>536 / UPEC</strain>
    </source>
</reference>
<organism>
    <name type="scientific">Escherichia coli O6:K15:H31 (strain 536 / UPEC)</name>
    <dbReference type="NCBI Taxonomy" id="362663"/>
    <lineage>
        <taxon>Bacteria</taxon>
        <taxon>Pseudomonadati</taxon>
        <taxon>Pseudomonadota</taxon>
        <taxon>Gammaproteobacteria</taxon>
        <taxon>Enterobacterales</taxon>
        <taxon>Enterobacteriaceae</taxon>
        <taxon>Escherichia</taxon>
    </lineage>
</organism>
<comment type="catalytic activity">
    <reaction>
        <text>(2R,3R)-tartrate = oxaloacetate + H2O</text>
        <dbReference type="Rhea" id="RHEA:15413"/>
        <dbReference type="ChEBI" id="CHEBI:15377"/>
        <dbReference type="ChEBI" id="CHEBI:16452"/>
        <dbReference type="ChEBI" id="CHEBI:30924"/>
        <dbReference type="EC" id="4.2.1.32"/>
    </reaction>
</comment>
<comment type="cofactor">
    <cofactor evidence="3">
        <name>iron-sulfur cluster</name>
        <dbReference type="ChEBI" id="CHEBI:30408"/>
    </cofactor>
</comment>
<comment type="subunit">
    <text evidence="1">Tetramer of two alpha and two beta subunits.</text>
</comment>
<comment type="induction">
    <text evidence="1">Induced by tartrate, via TtdR.</text>
</comment>
<comment type="similarity">
    <text evidence="4">Belongs to the class-I fumarase family.</text>
</comment>
<name>TTDA_ECOL5</name>
<gene>
    <name type="primary">ttdA</name>
    <name type="ordered locus">ECP_3151</name>
</gene>
<proteinExistence type="inferred from homology"/>